<reference key="1">
    <citation type="submission" date="2006-10" db="EMBL/GenBank/DDBJ databases">
        <authorList>
            <person name="Fleischmann R.D."/>
            <person name="Dodson R.J."/>
            <person name="Haft D.H."/>
            <person name="Merkel J.S."/>
            <person name="Nelson W.C."/>
            <person name="Fraser C.M."/>
        </authorList>
    </citation>
    <scope>NUCLEOTIDE SEQUENCE [LARGE SCALE GENOMIC DNA]</scope>
    <source>
        <strain>104</strain>
    </source>
</reference>
<gene>
    <name evidence="1" type="primary">groES</name>
    <name evidence="1" type="synonym">groS</name>
    <name type="ordered locus">MAV_4366</name>
</gene>
<name>CH10_MYCA1</name>
<proteinExistence type="inferred from homology"/>
<evidence type="ECO:0000255" key="1">
    <source>
        <dbReference type="HAMAP-Rule" id="MF_00580"/>
    </source>
</evidence>
<dbReference type="EMBL" id="CP000479">
    <property type="protein sequence ID" value="ABK67933.1"/>
    <property type="molecule type" value="Genomic_DNA"/>
</dbReference>
<dbReference type="RefSeq" id="WP_003873391.1">
    <property type="nucleotide sequence ID" value="NC_008595.1"/>
</dbReference>
<dbReference type="SMR" id="A0QKR3"/>
<dbReference type="GeneID" id="75271880"/>
<dbReference type="KEGG" id="mav:MAV_4366"/>
<dbReference type="HOGENOM" id="CLU_132825_2_0_11"/>
<dbReference type="Proteomes" id="UP000001574">
    <property type="component" value="Chromosome"/>
</dbReference>
<dbReference type="GO" id="GO:0005737">
    <property type="term" value="C:cytoplasm"/>
    <property type="evidence" value="ECO:0007669"/>
    <property type="project" value="UniProtKB-SubCell"/>
</dbReference>
<dbReference type="GO" id="GO:0005524">
    <property type="term" value="F:ATP binding"/>
    <property type="evidence" value="ECO:0007669"/>
    <property type="project" value="InterPro"/>
</dbReference>
<dbReference type="GO" id="GO:0046872">
    <property type="term" value="F:metal ion binding"/>
    <property type="evidence" value="ECO:0007669"/>
    <property type="project" value="TreeGrafter"/>
</dbReference>
<dbReference type="GO" id="GO:0044183">
    <property type="term" value="F:protein folding chaperone"/>
    <property type="evidence" value="ECO:0007669"/>
    <property type="project" value="InterPro"/>
</dbReference>
<dbReference type="GO" id="GO:0051087">
    <property type="term" value="F:protein-folding chaperone binding"/>
    <property type="evidence" value="ECO:0007669"/>
    <property type="project" value="TreeGrafter"/>
</dbReference>
<dbReference type="GO" id="GO:0051082">
    <property type="term" value="F:unfolded protein binding"/>
    <property type="evidence" value="ECO:0007669"/>
    <property type="project" value="TreeGrafter"/>
</dbReference>
<dbReference type="GO" id="GO:0051085">
    <property type="term" value="P:chaperone cofactor-dependent protein refolding"/>
    <property type="evidence" value="ECO:0007669"/>
    <property type="project" value="TreeGrafter"/>
</dbReference>
<dbReference type="CDD" id="cd00320">
    <property type="entry name" value="cpn10"/>
    <property type="match status" value="1"/>
</dbReference>
<dbReference type="FunFam" id="2.30.33.40:FF:000001">
    <property type="entry name" value="10 kDa chaperonin"/>
    <property type="match status" value="1"/>
</dbReference>
<dbReference type="Gene3D" id="2.30.33.40">
    <property type="entry name" value="GroES chaperonin"/>
    <property type="match status" value="1"/>
</dbReference>
<dbReference type="HAMAP" id="MF_00580">
    <property type="entry name" value="CH10"/>
    <property type="match status" value="1"/>
</dbReference>
<dbReference type="InterPro" id="IPR020818">
    <property type="entry name" value="Chaperonin_GroES"/>
</dbReference>
<dbReference type="InterPro" id="IPR037124">
    <property type="entry name" value="Chaperonin_GroES_sf"/>
</dbReference>
<dbReference type="InterPro" id="IPR018369">
    <property type="entry name" value="Chaprnonin_Cpn10_CS"/>
</dbReference>
<dbReference type="InterPro" id="IPR011032">
    <property type="entry name" value="GroES-like_sf"/>
</dbReference>
<dbReference type="NCBIfam" id="NF001530">
    <property type="entry name" value="PRK00364.1-6"/>
    <property type="match status" value="1"/>
</dbReference>
<dbReference type="NCBIfam" id="NF001531">
    <property type="entry name" value="PRK00364.2-2"/>
    <property type="match status" value="1"/>
</dbReference>
<dbReference type="NCBIfam" id="NF001533">
    <property type="entry name" value="PRK00364.2-4"/>
    <property type="match status" value="1"/>
</dbReference>
<dbReference type="NCBIfam" id="NF001534">
    <property type="entry name" value="PRK00364.2-5"/>
    <property type="match status" value="1"/>
</dbReference>
<dbReference type="PANTHER" id="PTHR10772">
    <property type="entry name" value="10 KDA HEAT SHOCK PROTEIN"/>
    <property type="match status" value="1"/>
</dbReference>
<dbReference type="PANTHER" id="PTHR10772:SF58">
    <property type="entry name" value="CO-CHAPERONIN GROES"/>
    <property type="match status" value="1"/>
</dbReference>
<dbReference type="Pfam" id="PF00166">
    <property type="entry name" value="Cpn10"/>
    <property type="match status" value="1"/>
</dbReference>
<dbReference type="PRINTS" id="PR00297">
    <property type="entry name" value="CHAPERONIN10"/>
</dbReference>
<dbReference type="SMART" id="SM00883">
    <property type="entry name" value="Cpn10"/>
    <property type="match status" value="1"/>
</dbReference>
<dbReference type="SUPFAM" id="SSF50129">
    <property type="entry name" value="GroES-like"/>
    <property type="match status" value="1"/>
</dbReference>
<dbReference type="PROSITE" id="PS00681">
    <property type="entry name" value="CHAPERONINS_CPN10"/>
    <property type="match status" value="1"/>
</dbReference>
<accession>A0QKR3</accession>
<protein>
    <recommendedName>
        <fullName evidence="1">Co-chaperonin GroES</fullName>
    </recommendedName>
    <alternativeName>
        <fullName evidence="1">10 kDa chaperonin</fullName>
    </alternativeName>
    <alternativeName>
        <fullName evidence="1">Chaperonin-10</fullName>
        <shortName evidence="1">Cpn10</shortName>
    </alternativeName>
</protein>
<comment type="function">
    <text evidence="1">Together with the chaperonin GroEL, plays an essential role in assisting protein folding. The GroEL-GroES system forms a nano-cage that allows encapsulation of the non-native substrate proteins and provides a physical environment optimized to promote and accelerate protein folding. GroES binds to the apical surface of the GroEL ring, thereby capping the opening of the GroEL channel.</text>
</comment>
<comment type="subunit">
    <text evidence="1">Heptamer of 7 subunits arranged in a ring. Interacts with the chaperonin GroEL.</text>
</comment>
<comment type="subcellular location">
    <subcellularLocation>
        <location evidence="1">Cytoplasm</location>
    </subcellularLocation>
</comment>
<comment type="similarity">
    <text evidence="1">Belongs to the GroES chaperonin family.</text>
</comment>
<keyword id="KW-0143">Chaperone</keyword>
<keyword id="KW-0963">Cytoplasm</keyword>
<feature type="chain" id="PRO_1000025302" description="Co-chaperonin GroES">
    <location>
        <begin position="1"/>
        <end position="100"/>
    </location>
</feature>
<organism>
    <name type="scientific">Mycobacterium avium (strain 104)</name>
    <dbReference type="NCBI Taxonomy" id="243243"/>
    <lineage>
        <taxon>Bacteria</taxon>
        <taxon>Bacillati</taxon>
        <taxon>Actinomycetota</taxon>
        <taxon>Actinomycetes</taxon>
        <taxon>Mycobacteriales</taxon>
        <taxon>Mycobacteriaceae</taxon>
        <taxon>Mycobacterium</taxon>
        <taxon>Mycobacterium avium complex (MAC)</taxon>
    </lineage>
</organism>
<sequence>MAKVNIKPLEDKILVQANEAETTTASGLVIPDTAKEKPQEGTVVAVGPGRWDDDGAKRIPLDVSEGDTVIYSKYGGTEIKYNGEEYLILSARDVLAVVSK</sequence>